<name>U73C1_ARATH</name>
<keyword id="KW-0216">Detoxification</keyword>
<keyword id="KW-0328">Glycosyltransferase</keyword>
<keyword id="KW-1185">Reference proteome</keyword>
<keyword id="KW-0808">Transferase</keyword>
<protein>
    <recommendedName>
        <fullName>UDP-glycosyltransferase 73C1</fullName>
        <ecNumber>2.4.1.-</ecNumber>
    </recommendedName>
    <alternativeName>
        <fullName>Cytokinin-O-glucosyltransferase 1</fullName>
    </alternativeName>
    <alternativeName>
        <fullName>Zeatin O-glucosyltransferase 1</fullName>
        <shortName>AtZOG1</shortName>
    </alternativeName>
</protein>
<gene>
    <name type="primary">UGT73C1</name>
    <name type="synonym">ZOG1</name>
    <name type="ordered locus">At2g36750</name>
    <name type="ORF">F13K3.15</name>
</gene>
<comment type="function">
    <text evidence="2 3">Involved in the O-glucosylation of trans-zeatin and dihydrozeatin. Also active in vitro on cis-zeatin, dihydrozeatin-9-N-Glc, and olomoucine. Can detoxify the explosive 2,4,6-trinitrotoluene in plant by forming O- or C-glucose conjugates.</text>
</comment>
<comment type="induction">
    <text evidence="2">Not induced by cytokinin treatment.</text>
</comment>
<comment type="similarity">
    <text evidence="4">Belongs to the UDP-glycosyltransferase family.</text>
</comment>
<proteinExistence type="evidence at transcript level"/>
<feature type="chain" id="PRO_0000074155" description="UDP-glycosyltransferase 73C1">
    <location>
        <begin position="1"/>
        <end position="491"/>
    </location>
</feature>
<feature type="binding site" evidence="1">
    <location>
        <position position="292"/>
    </location>
    <ligand>
        <name>UDP-alpha-D-glucose</name>
        <dbReference type="ChEBI" id="CHEBI:58885"/>
    </ligand>
</feature>
<feature type="binding site" evidence="1">
    <location>
        <begin position="352"/>
        <end position="354"/>
    </location>
    <ligand>
        <name>UDP-alpha-D-glucose</name>
        <dbReference type="ChEBI" id="CHEBI:58885"/>
    </ligand>
</feature>
<feature type="binding site" evidence="1">
    <location>
        <begin position="369"/>
        <end position="377"/>
    </location>
    <ligand>
        <name>UDP-alpha-D-glucose</name>
        <dbReference type="ChEBI" id="CHEBI:58885"/>
    </ligand>
</feature>
<feature type="binding site" evidence="1">
    <location>
        <begin position="391"/>
        <end position="394"/>
    </location>
    <ligand>
        <name>UDP-alpha-D-glucose</name>
        <dbReference type="ChEBI" id="CHEBI:58885"/>
    </ligand>
</feature>
<accession>Q9ZQ99</accession>
<accession>Q0V837</accession>
<dbReference type="EC" id="2.4.1.-"/>
<dbReference type="EMBL" id="AY573820">
    <property type="protein sequence ID" value="AAS87590.1"/>
    <property type="molecule type" value="Genomic_DNA"/>
</dbReference>
<dbReference type="EMBL" id="AC006282">
    <property type="protein sequence ID" value="AAD20151.1"/>
    <property type="molecule type" value="Genomic_DNA"/>
</dbReference>
<dbReference type="EMBL" id="CP002685">
    <property type="protein sequence ID" value="AEC09294.1"/>
    <property type="molecule type" value="Genomic_DNA"/>
</dbReference>
<dbReference type="EMBL" id="BT026383">
    <property type="protein sequence ID" value="ABH04490.1"/>
    <property type="molecule type" value="mRNA"/>
</dbReference>
<dbReference type="PIR" id="C84784">
    <property type="entry name" value="C84784"/>
</dbReference>
<dbReference type="RefSeq" id="NP_181213.1">
    <property type="nucleotide sequence ID" value="NM_129230.3"/>
</dbReference>
<dbReference type="SMR" id="Q9ZQ99"/>
<dbReference type="FunCoup" id="Q9ZQ99">
    <property type="interactions" value="121"/>
</dbReference>
<dbReference type="STRING" id="3702.Q9ZQ99"/>
<dbReference type="CAZy" id="GT1">
    <property type="family name" value="Glycosyltransferase Family 1"/>
</dbReference>
<dbReference type="PaxDb" id="3702-AT2G36750.1"/>
<dbReference type="ProteomicsDB" id="228730"/>
<dbReference type="EnsemblPlants" id="AT2G36750.1">
    <property type="protein sequence ID" value="AT2G36750.1"/>
    <property type="gene ID" value="AT2G36750"/>
</dbReference>
<dbReference type="GeneID" id="818247"/>
<dbReference type="Gramene" id="AT2G36750.1">
    <property type="protein sequence ID" value="AT2G36750.1"/>
    <property type="gene ID" value="AT2G36750"/>
</dbReference>
<dbReference type="KEGG" id="ath:AT2G36750"/>
<dbReference type="Araport" id="AT2G36750"/>
<dbReference type="TAIR" id="AT2G36750">
    <property type="gene designation" value="UGT73C1"/>
</dbReference>
<dbReference type="eggNOG" id="KOG1192">
    <property type="taxonomic scope" value="Eukaryota"/>
</dbReference>
<dbReference type="HOGENOM" id="CLU_001724_2_2_1"/>
<dbReference type="InParanoid" id="Q9ZQ99"/>
<dbReference type="OMA" id="ADMCLPY"/>
<dbReference type="PhylomeDB" id="Q9ZQ99"/>
<dbReference type="BioCyc" id="ARA:AT2G36750-MONOMER"/>
<dbReference type="BioCyc" id="MetaCyc:AT2G36750-MONOMER"/>
<dbReference type="BRENDA" id="2.4.1.203">
    <property type="organism ID" value="399"/>
</dbReference>
<dbReference type="PRO" id="PR:Q9ZQ99"/>
<dbReference type="Proteomes" id="UP000006548">
    <property type="component" value="Chromosome 2"/>
</dbReference>
<dbReference type="ExpressionAtlas" id="Q9ZQ99">
    <property type="expression patterns" value="baseline and differential"/>
</dbReference>
<dbReference type="GO" id="GO:0050502">
    <property type="term" value="F:cis-zeatin O-beta-D-glucosyltransferase activity"/>
    <property type="evidence" value="ECO:0000314"/>
    <property type="project" value="TAIR"/>
</dbReference>
<dbReference type="GO" id="GO:0050403">
    <property type="term" value="F:trans-zeatin O-beta-D-glucosyltransferase activity"/>
    <property type="evidence" value="ECO:0000314"/>
    <property type="project" value="TAIR"/>
</dbReference>
<dbReference type="GO" id="GO:0035251">
    <property type="term" value="F:UDP-glucosyltransferase activity"/>
    <property type="evidence" value="ECO:0000314"/>
    <property type="project" value="TAIR"/>
</dbReference>
<dbReference type="GO" id="GO:0009636">
    <property type="term" value="P:response to toxic substance"/>
    <property type="evidence" value="ECO:0007669"/>
    <property type="project" value="UniProtKB-KW"/>
</dbReference>
<dbReference type="GO" id="GO:0010224">
    <property type="term" value="P:response to UV-B"/>
    <property type="evidence" value="ECO:0000270"/>
    <property type="project" value="TAIR"/>
</dbReference>
<dbReference type="CDD" id="cd03784">
    <property type="entry name" value="GT1_Gtf-like"/>
    <property type="match status" value="1"/>
</dbReference>
<dbReference type="FunFam" id="3.40.50.2000:FF:000047">
    <property type="entry name" value="Glycosyltransferase"/>
    <property type="match status" value="1"/>
</dbReference>
<dbReference type="FunFam" id="3.40.50.2000:FF:000071">
    <property type="entry name" value="Glycosyltransferase"/>
    <property type="match status" value="1"/>
</dbReference>
<dbReference type="Gene3D" id="3.40.50.2000">
    <property type="entry name" value="Glycogen Phosphorylase B"/>
    <property type="match status" value="2"/>
</dbReference>
<dbReference type="InterPro" id="IPR002213">
    <property type="entry name" value="UDP_glucos_trans"/>
</dbReference>
<dbReference type="InterPro" id="IPR035595">
    <property type="entry name" value="UDP_glycos_trans_CS"/>
</dbReference>
<dbReference type="PANTHER" id="PTHR48047">
    <property type="entry name" value="GLYCOSYLTRANSFERASE"/>
    <property type="match status" value="1"/>
</dbReference>
<dbReference type="PANTHER" id="PTHR48047:SF88">
    <property type="entry name" value="UDP-GLYCOSYLTRANSFERASE 73C1"/>
    <property type="match status" value="1"/>
</dbReference>
<dbReference type="Pfam" id="PF00201">
    <property type="entry name" value="UDPGT"/>
    <property type="match status" value="1"/>
</dbReference>
<dbReference type="SUPFAM" id="SSF53756">
    <property type="entry name" value="UDP-Glycosyltransferase/glycogen phosphorylase"/>
    <property type="match status" value="1"/>
</dbReference>
<dbReference type="PROSITE" id="PS00375">
    <property type="entry name" value="UDPGT"/>
    <property type="match status" value="1"/>
</dbReference>
<organism>
    <name type="scientific">Arabidopsis thaliana</name>
    <name type="common">Mouse-ear cress</name>
    <dbReference type="NCBI Taxonomy" id="3702"/>
    <lineage>
        <taxon>Eukaryota</taxon>
        <taxon>Viridiplantae</taxon>
        <taxon>Streptophyta</taxon>
        <taxon>Embryophyta</taxon>
        <taxon>Tracheophyta</taxon>
        <taxon>Spermatophyta</taxon>
        <taxon>Magnoliopsida</taxon>
        <taxon>eudicotyledons</taxon>
        <taxon>Gunneridae</taxon>
        <taxon>Pentapetalae</taxon>
        <taxon>rosids</taxon>
        <taxon>malvids</taxon>
        <taxon>Brassicales</taxon>
        <taxon>Brassicaceae</taxon>
        <taxon>Camelineae</taxon>
        <taxon>Arabidopsis</taxon>
    </lineage>
</organism>
<sequence length="491" mass="55224">MASEFRPPLHFVLFPFMAQGHMIPMVDIARLLAQRGVTITIVTTPQNAGRFKNVLSRAIQSGLPINLVQVKFPSQESGSPEGQENLDLLDSLGASLTFFKAFSLLEEPVEKLLKEIQPRPNCIIADMCLPYTNRIAKNLGIPKIIFHGMCCFNLLCTHIMHQNHEFLETIESDKEYFPIPNFPDRVEFTKSQLPMVLVAGDWKDFLDGMTEGDNTSYGVIVNTFEELEPAYVRDYKKVKAGKIWSIGPVSLCNKLGEDQAERGNKADIDQDECIKWLDSKEEGSVLYVCLGSICNLPLSQLKELGLGLEESQRPFIWVIRGWEKYNELLEWISESGYKERIKERGLLITGWSPQMLILTHPAVGGFLTHCGWNSTLEGITSGVPLLTWPLFGDQFCNEKLAVQILKAGVRAGVEESMRWGEEEKIGVLVDKEGVKKAVEELMGDSNDAKERRKRVKELGELAHKAVEEGGSSHSNITFLLQDIMQLEQPKK</sequence>
<evidence type="ECO:0000250" key="1"/>
<evidence type="ECO:0000269" key="2">
    <source>
    </source>
</evidence>
<evidence type="ECO:0000269" key="3">
    <source>
    </source>
</evidence>
<evidence type="ECO:0000305" key="4"/>
<reference key="1">
    <citation type="submission" date="2004-03" db="EMBL/GenBank/DDBJ databases">
        <title>Arabidopsis genes encoding zeatin O-glucosyltransferases.</title>
        <authorList>
            <person name="Martin R.C."/>
            <person name="Mok M.C."/>
            <person name="Mok D.W.S."/>
        </authorList>
    </citation>
    <scope>NUCLEOTIDE SEQUENCE [GENOMIC DNA]</scope>
</reference>
<reference key="2">
    <citation type="journal article" date="1999" name="Nature">
        <title>Sequence and analysis of chromosome 2 of the plant Arabidopsis thaliana.</title>
        <authorList>
            <person name="Lin X."/>
            <person name="Kaul S."/>
            <person name="Rounsley S.D."/>
            <person name="Shea T.P."/>
            <person name="Benito M.-I."/>
            <person name="Town C.D."/>
            <person name="Fujii C.Y."/>
            <person name="Mason T.M."/>
            <person name="Bowman C.L."/>
            <person name="Barnstead M.E."/>
            <person name="Feldblyum T.V."/>
            <person name="Buell C.R."/>
            <person name="Ketchum K.A."/>
            <person name="Lee J.J."/>
            <person name="Ronning C.M."/>
            <person name="Koo H.L."/>
            <person name="Moffat K.S."/>
            <person name="Cronin L.A."/>
            <person name="Shen M."/>
            <person name="Pai G."/>
            <person name="Van Aken S."/>
            <person name="Umayam L."/>
            <person name="Tallon L.J."/>
            <person name="Gill J.E."/>
            <person name="Adams M.D."/>
            <person name="Carrera A.J."/>
            <person name="Creasy T.H."/>
            <person name="Goodman H.M."/>
            <person name="Somerville C.R."/>
            <person name="Copenhaver G.P."/>
            <person name="Preuss D."/>
            <person name="Nierman W.C."/>
            <person name="White O."/>
            <person name="Eisen J.A."/>
            <person name="Salzberg S.L."/>
            <person name="Fraser C.M."/>
            <person name="Venter J.C."/>
        </authorList>
    </citation>
    <scope>NUCLEOTIDE SEQUENCE [LARGE SCALE GENOMIC DNA]</scope>
    <source>
        <strain>cv. Columbia</strain>
    </source>
</reference>
<reference key="3">
    <citation type="journal article" date="2017" name="Plant J.">
        <title>Araport11: a complete reannotation of the Arabidopsis thaliana reference genome.</title>
        <authorList>
            <person name="Cheng C.Y."/>
            <person name="Krishnakumar V."/>
            <person name="Chan A.P."/>
            <person name="Thibaud-Nissen F."/>
            <person name="Schobel S."/>
            <person name="Town C.D."/>
        </authorList>
    </citation>
    <scope>GENOME REANNOTATION</scope>
    <source>
        <strain>cv. Columbia</strain>
    </source>
</reference>
<reference key="4">
    <citation type="submission" date="2006-08" db="EMBL/GenBank/DDBJ databases">
        <title>Arabidopsis ORF clones.</title>
        <authorList>
            <person name="Quinitio C."/>
            <person name="Chen H."/>
            <person name="Kim C.J."/>
            <person name="Shinn P."/>
            <person name="Ecker J.R."/>
        </authorList>
    </citation>
    <scope>NUCLEOTIDE SEQUENCE [LARGE SCALE MRNA]</scope>
    <source>
        <strain>cv. Columbia</strain>
    </source>
</reference>
<reference key="5">
    <citation type="journal article" date="2001" name="J. Biol. Chem.">
        <title>Phylogenetic analysis of the UDP-glycosyltransferase multigene family of Arabidopsis thaliana.</title>
        <authorList>
            <person name="Li Y."/>
            <person name="Baldauf S."/>
            <person name="Lim E.K."/>
            <person name="Bowles D.J."/>
        </authorList>
    </citation>
    <scope>GENE FAMILY</scope>
</reference>
<reference key="6">
    <citation type="journal article" date="2004" name="J. Biol. Chem.">
        <title>N-glucosylation of cytokinins by glycosyltransferases of Arabidopsis thaliana.</title>
        <authorList>
            <person name="Hou B."/>
            <person name="Lim E.-K."/>
            <person name="Higgins G.S."/>
            <person name="Bowles D.J."/>
        </authorList>
    </citation>
    <scope>FUNCTION</scope>
    <scope>INDUCTION</scope>
</reference>
<reference key="7">
    <citation type="journal article" date="2008" name="Plant J.">
        <title>Detoxification of the explosive 2,4,6-trinitrotoluene in Arabidopsis: discovery of bifunctional O- and C-glucosyltransferases.</title>
        <authorList>
            <person name="Gandia-Herrero F."/>
            <person name="Lorenz A."/>
            <person name="Larson T."/>
            <person name="Graham I.A."/>
            <person name="Bowles D.J."/>
            <person name="Rylott E.L."/>
            <person name="Bruce N.C."/>
        </authorList>
    </citation>
    <scope>FUNCTION</scope>
</reference>